<feature type="chain" id="PRO_0000140056" description="Glutamyl-tRNA(Gln) amidotransferase subunit D">
    <location>
        <begin position="1"/>
        <end position="435"/>
    </location>
</feature>
<feature type="domain" description="Asparaginase/glutaminase" evidence="2">
    <location>
        <begin position="91"/>
        <end position="419"/>
    </location>
</feature>
<feature type="active site" evidence="1">
    <location>
        <position position="101"/>
    </location>
</feature>
<feature type="active site" evidence="1">
    <location>
        <position position="177"/>
    </location>
</feature>
<feature type="active site" evidence="1">
    <location>
        <position position="178"/>
    </location>
</feature>
<feature type="active site" evidence="1">
    <location>
        <position position="254"/>
    </location>
</feature>
<feature type="helix" evidence="4">
    <location>
        <begin position="5"/>
        <end position="12"/>
    </location>
</feature>
<feature type="turn" evidence="4">
    <location>
        <begin position="13"/>
        <end position="15"/>
    </location>
</feature>
<feature type="strand" evidence="4">
    <location>
        <begin position="21"/>
        <end position="25"/>
    </location>
</feature>
<feature type="strand" evidence="4">
    <location>
        <begin position="30"/>
        <end position="35"/>
    </location>
</feature>
<feature type="strand" evidence="4">
    <location>
        <begin position="44"/>
        <end position="50"/>
    </location>
</feature>
<feature type="strand" evidence="4">
    <location>
        <begin position="56"/>
        <end position="60"/>
    </location>
</feature>
<feature type="strand" evidence="4">
    <location>
        <begin position="68"/>
        <end position="70"/>
    </location>
</feature>
<feature type="strand" evidence="4">
    <location>
        <begin position="88"/>
        <end position="90"/>
    </location>
</feature>
<feature type="strand" evidence="4">
    <location>
        <begin position="92"/>
        <end position="99"/>
    </location>
</feature>
<feature type="turn" evidence="4">
    <location>
        <begin position="108"/>
        <end position="110"/>
    </location>
</feature>
<feature type="helix" evidence="4">
    <location>
        <begin position="121"/>
        <end position="125"/>
    </location>
</feature>
<feature type="helix" evidence="4">
    <location>
        <begin position="127"/>
        <end position="131"/>
    </location>
</feature>
<feature type="strand" evidence="4">
    <location>
        <begin position="134"/>
        <end position="136"/>
    </location>
</feature>
<feature type="helix" evidence="4">
    <location>
        <begin position="145"/>
        <end position="147"/>
    </location>
</feature>
<feature type="helix" evidence="4">
    <location>
        <begin position="150"/>
        <end position="165"/>
    </location>
</feature>
<feature type="strand" evidence="4">
    <location>
        <begin position="169"/>
        <end position="174"/>
    </location>
</feature>
<feature type="turn" evidence="4">
    <location>
        <begin position="177"/>
        <end position="179"/>
    </location>
</feature>
<feature type="helix" evidence="4">
    <location>
        <begin position="180"/>
        <end position="190"/>
    </location>
</feature>
<feature type="strand" evidence="4">
    <location>
        <begin position="197"/>
        <end position="200"/>
    </location>
</feature>
<feature type="helix" evidence="4">
    <location>
        <begin position="213"/>
        <end position="225"/>
    </location>
</feature>
<feature type="strand" evidence="4">
    <location>
        <begin position="230"/>
        <end position="242"/>
    </location>
</feature>
<feature type="strand" evidence="4">
    <location>
        <begin position="244"/>
        <end position="248"/>
    </location>
</feature>
<feature type="helix" evidence="4">
    <location>
        <begin position="249"/>
        <end position="251"/>
    </location>
</feature>
<feature type="strand" evidence="4">
    <location>
        <begin position="252"/>
        <end position="254"/>
    </location>
</feature>
<feature type="strand" evidence="4">
    <location>
        <begin position="256"/>
        <end position="258"/>
    </location>
</feature>
<feature type="strand" evidence="4">
    <location>
        <begin position="263"/>
        <end position="268"/>
    </location>
</feature>
<feature type="strand" evidence="4">
    <location>
        <begin position="271"/>
        <end position="275"/>
    </location>
</feature>
<feature type="strand" evidence="4">
    <location>
        <begin position="304"/>
        <end position="308"/>
    </location>
</feature>
<feature type="helix" evidence="4">
    <location>
        <begin position="315"/>
        <end position="323"/>
    </location>
</feature>
<feature type="strand" evidence="4">
    <location>
        <begin position="327"/>
        <end position="334"/>
    </location>
</feature>
<feature type="turn" evidence="4">
    <location>
        <begin position="335"/>
        <end position="337"/>
    </location>
</feature>
<feature type="helix" evidence="4">
    <location>
        <begin position="341"/>
        <end position="343"/>
    </location>
</feature>
<feature type="helix" evidence="4">
    <location>
        <begin position="344"/>
        <end position="352"/>
    </location>
</feature>
<feature type="strand" evidence="4">
    <location>
        <begin position="357"/>
        <end position="361"/>
    </location>
</feature>
<feature type="helix" evidence="4">
    <location>
        <begin position="374"/>
        <end position="381"/>
    </location>
</feature>
<feature type="helix" evidence="4">
    <location>
        <begin position="392"/>
        <end position="402"/>
    </location>
</feature>
<feature type="turn" evidence="4">
    <location>
        <begin position="403"/>
        <end position="405"/>
    </location>
</feature>
<feature type="helix" evidence="4">
    <location>
        <begin position="409"/>
        <end position="417"/>
    </location>
</feature>
<feature type="strand" evidence="4">
    <location>
        <begin position="420"/>
        <end position="422"/>
    </location>
</feature>
<feature type="helix" evidence="4">
    <location>
        <begin position="430"/>
        <end position="432"/>
    </location>
</feature>
<keyword id="KW-0002">3D-structure</keyword>
<keyword id="KW-0067">ATP-binding</keyword>
<keyword id="KW-0436">Ligase</keyword>
<keyword id="KW-0547">Nucleotide-binding</keyword>
<keyword id="KW-0648">Protein biosynthesis</keyword>
<keyword id="KW-1185">Reference proteome</keyword>
<accession>O26802</accession>
<sequence length="435" mass="47997">MSYQGRARKFLESASIDVGDMVLVEKPDVTYEGMVLDRADDADDRHIVLKLENGYNIGVEISDARIELLEKGSEPRIELPPVEAAEDPELPDVSIISTGGTVASIIDYRTGAVHPAFTADDLLRANPELLDIANIRGRAVFNILSENMKPEYWVETARAVYGEIKDGADGVVVAHGTDTMHYTSAALSFMLRTPVPVVFTGAQRSSDRPSSDASLNIQCSVRAATSEIAEVTVCMHATMDDLSCHLHRGVKVRKMHTSRRDTFRSMNALPLAEVTPDGIKILEENYRKRGSDELELSDRVEERVAFIKSYPGISPDIIKWHLDEGYRGIVIEGTGLGHCPDTLIPVIGEAHDMGVPVAMTSQCLNGRVNMNVYSTGRRLLQAGVIPCDDMLPEVAYVKMCWVLGQTDDPEMAREMMRENIAGEINERTSIAYFRG</sequence>
<dbReference type="EC" id="6.3.5.-"/>
<dbReference type="EMBL" id="AE000666">
    <property type="protein sequence ID" value="AAB85211.1"/>
    <property type="molecule type" value="Genomic_DNA"/>
</dbReference>
<dbReference type="PIR" id="C69194">
    <property type="entry name" value="C69194"/>
</dbReference>
<dbReference type="RefSeq" id="WP_010876345.1">
    <property type="nucleotide sequence ID" value="NC_000916.1"/>
</dbReference>
<dbReference type="PDB" id="2D6F">
    <property type="method" value="X-ray"/>
    <property type="resolution" value="3.15 A"/>
    <property type="chains" value="A/B=1-435"/>
</dbReference>
<dbReference type="PDBsum" id="2D6F"/>
<dbReference type="SMR" id="O26802"/>
<dbReference type="FunCoup" id="O26802">
    <property type="interactions" value="38"/>
</dbReference>
<dbReference type="STRING" id="187420.MTH_706"/>
<dbReference type="PaxDb" id="187420-MTH_706"/>
<dbReference type="EnsemblBacteria" id="AAB85211">
    <property type="protein sequence ID" value="AAB85211"/>
    <property type="gene ID" value="MTH_706"/>
</dbReference>
<dbReference type="GeneID" id="1470667"/>
<dbReference type="GeneID" id="77401244"/>
<dbReference type="KEGG" id="mth:MTH_706"/>
<dbReference type="PATRIC" id="fig|187420.15.peg.689"/>
<dbReference type="HOGENOM" id="CLU_019134_2_1_2"/>
<dbReference type="InParanoid" id="O26802"/>
<dbReference type="BioCyc" id="MetaCyc:MONOMER-14998"/>
<dbReference type="EvolutionaryTrace" id="O26802"/>
<dbReference type="Proteomes" id="UP000005223">
    <property type="component" value="Chromosome"/>
</dbReference>
<dbReference type="GO" id="GO:0004067">
    <property type="term" value="F:asparaginase activity"/>
    <property type="evidence" value="ECO:0007669"/>
    <property type="project" value="InterPro"/>
</dbReference>
<dbReference type="GO" id="GO:0005524">
    <property type="term" value="F:ATP binding"/>
    <property type="evidence" value="ECO:0007669"/>
    <property type="project" value="UniProtKB-KW"/>
</dbReference>
<dbReference type="GO" id="GO:0050567">
    <property type="term" value="F:glutaminyl-tRNA synthase (glutamine-hydrolyzing) activity"/>
    <property type="evidence" value="ECO:0007669"/>
    <property type="project" value="UniProtKB-UniRule"/>
</dbReference>
<dbReference type="GO" id="GO:0006520">
    <property type="term" value="P:amino acid metabolic process"/>
    <property type="evidence" value="ECO:0007669"/>
    <property type="project" value="InterPro"/>
</dbReference>
<dbReference type="GO" id="GO:0006450">
    <property type="term" value="P:regulation of translational fidelity"/>
    <property type="evidence" value="ECO:0007669"/>
    <property type="project" value="InterPro"/>
</dbReference>
<dbReference type="GO" id="GO:0006412">
    <property type="term" value="P:translation"/>
    <property type="evidence" value="ECO:0007669"/>
    <property type="project" value="UniProtKB-UniRule"/>
</dbReference>
<dbReference type="CDD" id="cd08962">
    <property type="entry name" value="GatD"/>
    <property type="match status" value="1"/>
</dbReference>
<dbReference type="Gene3D" id="2.30.30.520">
    <property type="match status" value="1"/>
</dbReference>
<dbReference type="Gene3D" id="3.40.50.40">
    <property type="match status" value="1"/>
</dbReference>
<dbReference type="Gene3D" id="3.40.50.1170">
    <property type="entry name" value="L-asparaginase, N-terminal domain"/>
    <property type="match status" value="1"/>
</dbReference>
<dbReference type="HAMAP" id="MF_00586">
    <property type="entry name" value="GatD"/>
    <property type="match status" value="1"/>
</dbReference>
<dbReference type="InterPro" id="IPR006033">
    <property type="entry name" value="AsnA_fam"/>
</dbReference>
<dbReference type="InterPro" id="IPR036152">
    <property type="entry name" value="Asp/glu_Ase-like_sf"/>
</dbReference>
<dbReference type="InterPro" id="IPR006034">
    <property type="entry name" value="Asparaginase/glutaminase-like"/>
</dbReference>
<dbReference type="InterPro" id="IPR020827">
    <property type="entry name" value="Asparaginase/glutaminase_AS1"/>
</dbReference>
<dbReference type="InterPro" id="IPR027475">
    <property type="entry name" value="Asparaginase/glutaminase_AS2"/>
</dbReference>
<dbReference type="InterPro" id="IPR040919">
    <property type="entry name" value="Asparaginase_C"/>
</dbReference>
<dbReference type="InterPro" id="IPR011878">
    <property type="entry name" value="GatD"/>
</dbReference>
<dbReference type="InterPro" id="IPR040918">
    <property type="entry name" value="GatD_N"/>
</dbReference>
<dbReference type="InterPro" id="IPR037222">
    <property type="entry name" value="GatD_N_sf"/>
</dbReference>
<dbReference type="InterPro" id="IPR027473">
    <property type="entry name" value="L-asparaginase_C"/>
</dbReference>
<dbReference type="InterPro" id="IPR027474">
    <property type="entry name" value="L-asparaginase_N"/>
</dbReference>
<dbReference type="InterPro" id="IPR037152">
    <property type="entry name" value="L-asparaginase_N_sf"/>
</dbReference>
<dbReference type="NCBIfam" id="TIGR00519">
    <property type="entry name" value="asnASE_I"/>
    <property type="match status" value="1"/>
</dbReference>
<dbReference type="NCBIfam" id="TIGR02153">
    <property type="entry name" value="gatD_arch"/>
    <property type="match status" value="1"/>
</dbReference>
<dbReference type="NCBIfam" id="NF003217">
    <property type="entry name" value="PRK04183.1"/>
    <property type="match status" value="1"/>
</dbReference>
<dbReference type="PANTHER" id="PTHR11707:SF28">
    <property type="entry name" value="60 KDA LYSOPHOSPHOLIPASE"/>
    <property type="match status" value="1"/>
</dbReference>
<dbReference type="PANTHER" id="PTHR11707">
    <property type="entry name" value="L-ASPARAGINASE"/>
    <property type="match status" value="1"/>
</dbReference>
<dbReference type="Pfam" id="PF00710">
    <property type="entry name" value="Asparaginase"/>
    <property type="match status" value="1"/>
</dbReference>
<dbReference type="Pfam" id="PF17763">
    <property type="entry name" value="Asparaginase_C"/>
    <property type="match status" value="1"/>
</dbReference>
<dbReference type="Pfam" id="PF18195">
    <property type="entry name" value="GatD_N"/>
    <property type="match status" value="1"/>
</dbReference>
<dbReference type="PIRSF" id="PIRSF500175">
    <property type="entry name" value="Glu_ADT_D"/>
    <property type="match status" value="1"/>
</dbReference>
<dbReference type="PIRSF" id="PIRSF001220">
    <property type="entry name" value="L-ASNase_gatD"/>
    <property type="match status" value="1"/>
</dbReference>
<dbReference type="PRINTS" id="PR00139">
    <property type="entry name" value="ASNGLNASE"/>
</dbReference>
<dbReference type="SFLD" id="SFLDS00057">
    <property type="entry name" value="Glutaminase/Asparaginase"/>
    <property type="match status" value="1"/>
</dbReference>
<dbReference type="SMART" id="SM00870">
    <property type="entry name" value="Asparaginase"/>
    <property type="match status" value="1"/>
</dbReference>
<dbReference type="SUPFAM" id="SSF141300">
    <property type="entry name" value="GatD N-terminal domain-like"/>
    <property type="match status" value="1"/>
</dbReference>
<dbReference type="SUPFAM" id="SSF53774">
    <property type="entry name" value="Glutaminase/Asparaginase"/>
    <property type="match status" value="1"/>
</dbReference>
<dbReference type="PROSITE" id="PS00144">
    <property type="entry name" value="ASN_GLN_ASE_1"/>
    <property type="match status" value="1"/>
</dbReference>
<dbReference type="PROSITE" id="PS00917">
    <property type="entry name" value="ASN_GLN_ASE_2"/>
    <property type="match status" value="1"/>
</dbReference>
<dbReference type="PROSITE" id="PS51732">
    <property type="entry name" value="ASN_GLN_ASE_3"/>
    <property type="match status" value="1"/>
</dbReference>
<name>GATD_METTH</name>
<organism>
    <name type="scientific">Methanothermobacter thermautotrophicus (strain ATCC 29096 / DSM 1053 / JCM 10044 / NBRC 100330 / Delta H)</name>
    <name type="common">Methanobacterium thermoautotrophicum</name>
    <dbReference type="NCBI Taxonomy" id="187420"/>
    <lineage>
        <taxon>Archaea</taxon>
        <taxon>Methanobacteriati</taxon>
        <taxon>Methanobacteriota</taxon>
        <taxon>Methanomada group</taxon>
        <taxon>Methanobacteria</taxon>
        <taxon>Methanobacteriales</taxon>
        <taxon>Methanobacteriaceae</taxon>
        <taxon>Methanothermobacter</taxon>
    </lineage>
</organism>
<proteinExistence type="evidence at protein level"/>
<comment type="function">
    <text>Allows the formation of correctly charged Gln-tRNA(Gln) through the transamidation of misacylated Glu-tRNA(Gln) in organisms which lack glutaminyl-tRNA synthetase. The reaction takes place in the presence of glutamine and ATP through an activated gamma-phospho-Glu-tRNA(Gln). The GatDE system is specific for glutamate and does not act on aspartate.</text>
</comment>
<comment type="catalytic activity">
    <reaction>
        <text>L-glutamyl-tRNA(Gln) + L-glutamine + ATP + H2O = L-glutaminyl-tRNA(Gln) + L-glutamate + ADP + phosphate + H(+)</text>
        <dbReference type="Rhea" id="RHEA:17521"/>
        <dbReference type="Rhea" id="RHEA-COMP:9681"/>
        <dbReference type="Rhea" id="RHEA-COMP:9684"/>
        <dbReference type="ChEBI" id="CHEBI:15377"/>
        <dbReference type="ChEBI" id="CHEBI:15378"/>
        <dbReference type="ChEBI" id="CHEBI:29985"/>
        <dbReference type="ChEBI" id="CHEBI:30616"/>
        <dbReference type="ChEBI" id="CHEBI:43474"/>
        <dbReference type="ChEBI" id="CHEBI:58359"/>
        <dbReference type="ChEBI" id="CHEBI:78520"/>
        <dbReference type="ChEBI" id="CHEBI:78521"/>
        <dbReference type="ChEBI" id="CHEBI:456216"/>
    </reaction>
</comment>
<comment type="subunit">
    <text>Heterodimer of GatD and GatE.</text>
</comment>
<comment type="similarity">
    <text evidence="3">Belongs to the asparaginase 1 family. GatD subfamily.</text>
</comment>
<protein>
    <recommendedName>
        <fullName>Glutamyl-tRNA(Gln) amidotransferase subunit D</fullName>
        <shortName>Glu-ADT subunit D</shortName>
        <ecNumber>6.3.5.-</ecNumber>
    </recommendedName>
</protein>
<reference key="1">
    <citation type="journal article" date="1997" name="J. Bacteriol.">
        <title>Complete genome sequence of Methanobacterium thermoautotrophicum deltaH: functional analysis and comparative genomics.</title>
        <authorList>
            <person name="Smith D.R."/>
            <person name="Doucette-Stamm L.A."/>
            <person name="Deloughery C."/>
            <person name="Lee H.-M."/>
            <person name="Dubois J."/>
            <person name="Aldredge T."/>
            <person name="Bashirzadeh R."/>
            <person name="Blakely D."/>
            <person name="Cook R."/>
            <person name="Gilbert K."/>
            <person name="Harrison D."/>
            <person name="Hoang L."/>
            <person name="Keagle P."/>
            <person name="Lumm W."/>
            <person name="Pothier B."/>
            <person name="Qiu D."/>
            <person name="Spadafora R."/>
            <person name="Vicare R."/>
            <person name="Wang Y."/>
            <person name="Wierzbowski J."/>
            <person name="Gibson R."/>
            <person name="Jiwani N."/>
            <person name="Caruso A."/>
            <person name="Bush D."/>
            <person name="Safer H."/>
            <person name="Patwell D."/>
            <person name="Prabhakar S."/>
            <person name="McDougall S."/>
            <person name="Shimer G."/>
            <person name="Goyal A."/>
            <person name="Pietrovski S."/>
            <person name="Church G.M."/>
            <person name="Daniels C.J."/>
            <person name="Mao J.-I."/>
            <person name="Rice P."/>
            <person name="Noelling J."/>
            <person name="Reeve J.N."/>
        </authorList>
    </citation>
    <scope>NUCLEOTIDE SEQUENCE [LARGE SCALE GENOMIC DNA]</scope>
    <source>
        <strain>ATCC 29096 / DSM 1053 / JCM 10044 / NBRC 100330 / Delta H</strain>
    </source>
</reference>
<reference key="2">
    <citation type="journal article" date="2000" name="Nature">
        <title>Domain-specific recruitment of amide amino acids for protein synthesis.</title>
        <authorList>
            <person name="Tumbula D.L."/>
            <person name="Becker H.D."/>
            <person name="Chang W.-Z."/>
            <person name="Soell D."/>
        </authorList>
    </citation>
    <scope>CHARACTERIZATION</scope>
    <source>
        <strain>ATCC 29096 / DSM 1053 / JCM 10044 / NBRC 100330 / Delta H</strain>
    </source>
</reference>
<gene>
    <name type="primary">gatD</name>
    <name type="ordered locus">MTH_706</name>
</gene>
<evidence type="ECO:0000250" key="1"/>
<evidence type="ECO:0000255" key="2">
    <source>
        <dbReference type="PROSITE-ProRule" id="PRU01068"/>
    </source>
</evidence>
<evidence type="ECO:0000305" key="3"/>
<evidence type="ECO:0007829" key="4">
    <source>
        <dbReference type="PDB" id="2D6F"/>
    </source>
</evidence>